<evidence type="ECO:0000255" key="1">
    <source>
        <dbReference type="HAMAP-Rule" id="MF_00399"/>
    </source>
</evidence>
<evidence type="ECO:0000256" key="2">
    <source>
        <dbReference type="SAM" id="MobiDB-lite"/>
    </source>
</evidence>
<protein>
    <recommendedName>
        <fullName evidence="1">Thiol:disulfide interchange protein DsbD</fullName>
        <ecNumber evidence="1">1.8.1.8</ecNumber>
    </recommendedName>
    <alternativeName>
        <fullName evidence="1">Protein-disulfide reductase</fullName>
        <shortName evidence="1">Disulfide reductase</shortName>
    </alternativeName>
</protein>
<comment type="function">
    <text evidence="1">Required to facilitate the formation of correct disulfide bonds in some periplasmic proteins and for the assembly of the periplasmic c-type cytochromes. Acts by transferring electrons from cytoplasmic thioredoxin to the periplasm. This transfer involves a cascade of disulfide bond formation and reduction steps.</text>
</comment>
<comment type="catalytic activity">
    <reaction evidence="1">
        <text>[protein]-dithiol + NAD(+) = [protein]-disulfide + NADH + H(+)</text>
        <dbReference type="Rhea" id="RHEA:18749"/>
        <dbReference type="Rhea" id="RHEA-COMP:10593"/>
        <dbReference type="Rhea" id="RHEA-COMP:10594"/>
        <dbReference type="ChEBI" id="CHEBI:15378"/>
        <dbReference type="ChEBI" id="CHEBI:29950"/>
        <dbReference type="ChEBI" id="CHEBI:50058"/>
        <dbReference type="ChEBI" id="CHEBI:57540"/>
        <dbReference type="ChEBI" id="CHEBI:57945"/>
        <dbReference type="EC" id="1.8.1.8"/>
    </reaction>
</comment>
<comment type="catalytic activity">
    <reaction evidence="1">
        <text>[protein]-dithiol + NADP(+) = [protein]-disulfide + NADPH + H(+)</text>
        <dbReference type="Rhea" id="RHEA:18753"/>
        <dbReference type="Rhea" id="RHEA-COMP:10593"/>
        <dbReference type="Rhea" id="RHEA-COMP:10594"/>
        <dbReference type="ChEBI" id="CHEBI:15378"/>
        <dbReference type="ChEBI" id="CHEBI:29950"/>
        <dbReference type="ChEBI" id="CHEBI:50058"/>
        <dbReference type="ChEBI" id="CHEBI:57783"/>
        <dbReference type="ChEBI" id="CHEBI:58349"/>
        <dbReference type="EC" id="1.8.1.8"/>
    </reaction>
</comment>
<comment type="subcellular location">
    <subcellularLocation>
        <location evidence="1">Cell inner membrane</location>
        <topology evidence="1">Multi-pass membrane protein</topology>
    </subcellularLocation>
</comment>
<comment type="similarity">
    <text evidence="1">Belongs to the thioredoxin family. DsbD subfamily.</text>
</comment>
<accession>A6TH46</accession>
<proteinExistence type="inferred from homology"/>
<sequence>MAYRIITLILLLCSTSATAGLFDAPGRSNFVPADQAFAFDFQQQQHDVNLSWQIKDGYYLYRQQFTFSAAGATIDEPALPAGEWHEDEFYGKSEIFRQRLTVPVTVKEADKEATLTVTWQGCADAGFCYPPETKVIPLSAVRAASNDGQATAIEPMPSTSSRPAFNPPLPVEPRPAPELATSPAPAAVPPADTPARLPFTALWALLIGIGIAFTPCVLPMYPLISGIVLGGKQRLSTARALLLAFIYVQGMALTYTALGLVVAAAGLQFQAALQHPYVLVGLSAVFILLALSMFGLFTLQLPSSLQTRLTLLSNKRQGGSPGGVFAMGAIAGLICSPCTTAPLSAILLYIAQSGNLWLGGGTLYLYALGMGLPLILMTVFGNRLLPKSGPWMSHVKTAFGFVILALPVFLLERILGDQWGLRLWSMLGVAFFSWAFITSLGATRPWMRLVQIILLAAALVSARPLQDWAFGAPAVEQQAHLAFTRVSSVAELDQALAQAKGQPVMLDLYADWCVACKEFEKYTFSSPDVQQALKGTVLLQVDVTKNSPQDVALLKHLQVLGLPTILFFNAEGQEQSERRVTGFMDAAAFSAHLRDWQA</sequence>
<name>DSBD_KLEP7</name>
<reference key="1">
    <citation type="submission" date="2006-09" db="EMBL/GenBank/DDBJ databases">
        <authorList>
            <consortium name="The Klebsiella pneumonia Genome Sequencing Project"/>
            <person name="McClelland M."/>
            <person name="Sanderson E.K."/>
            <person name="Spieth J."/>
            <person name="Clifton W.S."/>
            <person name="Latreille P."/>
            <person name="Sabo A."/>
            <person name="Pepin K."/>
            <person name="Bhonagiri V."/>
            <person name="Porwollik S."/>
            <person name="Ali J."/>
            <person name="Wilson R.K."/>
        </authorList>
    </citation>
    <scope>NUCLEOTIDE SEQUENCE [LARGE SCALE GENOMIC DNA]</scope>
    <source>
        <strain>ATCC 700721 / MGH 78578</strain>
    </source>
</reference>
<dbReference type="EC" id="1.8.1.8" evidence="1"/>
<dbReference type="EMBL" id="CP000647">
    <property type="protein sequence ID" value="ABR79880.1"/>
    <property type="molecule type" value="Genomic_DNA"/>
</dbReference>
<dbReference type="RefSeq" id="WP_015959279.1">
    <property type="nucleotide sequence ID" value="NC_009648.1"/>
</dbReference>
<dbReference type="SMR" id="A6TH46"/>
<dbReference type="STRING" id="272620.KPN_04526"/>
<dbReference type="PaxDb" id="272620-KPN_04526"/>
<dbReference type="EnsemblBacteria" id="ABR79880">
    <property type="protein sequence ID" value="ABR79880"/>
    <property type="gene ID" value="KPN_04526"/>
</dbReference>
<dbReference type="KEGG" id="kpn:KPN_04526"/>
<dbReference type="HOGENOM" id="CLU_014657_3_0_6"/>
<dbReference type="Proteomes" id="UP000000265">
    <property type="component" value="Chromosome"/>
</dbReference>
<dbReference type="GO" id="GO:0005886">
    <property type="term" value="C:plasma membrane"/>
    <property type="evidence" value="ECO:0007669"/>
    <property type="project" value="UniProtKB-SubCell"/>
</dbReference>
<dbReference type="GO" id="GO:0009055">
    <property type="term" value="F:electron transfer activity"/>
    <property type="evidence" value="ECO:0007669"/>
    <property type="project" value="UniProtKB-UniRule"/>
</dbReference>
<dbReference type="GO" id="GO:0047134">
    <property type="term" value="F:protein-disulfide reductase [NAD(P)H] activity"/>
    <property type="evidence" value="ECO:0007669"/>
    <property type="project" value="UniProtKB-UniRule"/>
</dbReference>
<dbReference type="GO" id="GO:0045454">
    <property type="term" value="P:cell redox homeostasis"/>
    <property type="evidence" value="ECO:0007669"/>
    <property type="project" value="TreeGrafter"/>
</dbReference>
<dbReference type="GO" id="GO:0017004">
    <property type="term" value="P:cytochrome complex assembly"/>
    <property type="evidence" value="ECO:0007669"/>
    <property type="project" value="UniProtKB-UniRule"/>
</dbReference>
<dbReference type="CDD" id="cd02953">
    <property type="entry name" value="DsbDgamma"/>
    <property type="match status" value="1"/>
</dbReference>
<dbReference type="FunFam" id="2.60.40.1250:FF:000001">
    <property type="entry name" value="Thiol:disulfide interchange protein DsbD"/>
    <property type="match status" value="1"/>
</dbReference>
<dbReference type="FunFam" id="3.40.30.10:FF:000116">
    <property type="entry name" value="Thiol:disulfide interchange protein DsbD"/>
    <property type="match status" value="1"/>
</dbReference>
<dbReference type="Gene3D" id="3.40.30.10">
    <property type="entry name" value="Glutaredoxin"/>
    <property type="match status" value="1"/>
</dbReference>
<dbReference type="Gene3D" id="2.60.40.1250">
    <property type="entry name" value="Thiol:disulfide interchange protein DsbD, N-terminal domain"/>
    <property type="match status" value="1"/>
</dbReference>
<dbReference type="HAMAP" id="MF_00399">
    <property type="entry name" value="DbsD"/>
    <property type="match status" value="1"/>
</dbReference>
<dbReference type="InterPro" id="IPR003834">
    <property type="entry name" value="Cyt_c_assmbl_TM_dom"/>
</dbReference>
<dbReference type="InterPro" id="IPR035671">
    <property type="entry name" value="DsbD_gamma"/>
</dbReference>
<dbReference type="InterPro" id="IPR028250">
    <property type="entry name" value="DsbDN"/>
</dbReference>
<dbReference type="InterPro" id="IPR036929">
    <property type="entry name" value="DsbDN_sf"/>
</dbReference>
<dbReference type="InterPro" id="IPR022910">
    <property type="entry name" value="Thiol_diS_interchange_DbsD"/>
</dbReference>
<dbReference type="InterPro" id="IPR036249">
    <property type="entry name" value="Thioredoxin-like_sf"/>
</dbReference>
<dbReference type="InterPro" id="IPR017937">
    <property type="entry name" value="Thioredoxin_CS"/>
</dbReference>
<dbReference type="InterPro" id="IPR013766">
    <property type="entry name" value="Thioredoxin_domain"/>
</dbReference>
<dbReference type="NCBIfam" id="NF001419">
    <property type="entry name" value="PRK00293.1"/>
    <property type="match status" value="1"/>
</dbReference>
<dbReference type="PANTHER" id="PTHR32234">
    <property type="entry name" value="THIOL:DISULFIDE INTERCHANGE PROTEIN DSBD"/>
    <property type="match status" value="1"/>
</dbReference>
<dbReference type="PANTHER" id="PTHR32234:SF0">
    <property type="entry name" value="THIOL:DISULFIDE INTERCHANGE PROTEIN DSBD"/>
    <property type="match status" value="1"/>
</dbReference>
<dbReference type="Pfam" id="PF11412">
    <property type="entry name" value="DsbD_N"/>
    <property type="match status" value="1"/>
</dbReference>
<dbReference type="Pfam" id="PF02683">
    <property type="entry name" value="DsbD_TM"/>
    <property type="match status" value="1"/>
</dbReference>
<dbReference type="Pfam" id="PF13899">
    <property type="entry name" value="Thioredoxin_7"/>
    <property type="match status" value="1"/>
</dbReference>
<dbReference type="SUPFAM" id="SSF74863">
    <property type="entry name" value="Thiol:disulfide interchange protein DsbD, N-terminal domain (DsbD-alpha)"/>
    <property type="match status" value="1"/>
</dbReference>
<dbReference type="SUPFAM" id="SSF52833">
    <property type="entry name" value="Thioredoxin-like"/>
    <property type="match status" value="1"/>
</dbReference>
<dbReference type="PROSITE" id="PS00194">
    <property type="entry name" value="THIOREDOXIN_1"/>
    <property type="match status" value="1"/>
</dbReference>
<dbReference type="PROSITE" id="PS51352">
    <property type="entry name" value="THIOREDOXIN_2"/>
    <property type="match status" value="1"/>
</dbReference>
<organism>
    <name type="scientific">Klebsiella pneumoniae subsp. pneumoniae (strain ATCC 700721 / MGH 78578)</name>
    <dbReference type="NCBI Taxonomy" id="272620"/>
    <lineage>
        <taxon>Bacteria</taxon>
        <taxon>Pseudomonadati</taxon>
        <taxon>Pseudomonadota</taxon>
        <taxon>Gammaproteobacteria</taxon>
        <taxon>Enterobacterales</taxon>
        <taxon>Enterobacteriaceae</taxon>
        <taxon>Klebsiella/Raoultella group</taxon>
        <taxon>Klebsiella</taxon>
        <taxon>Klebsiella pneumoniae complex</taxon>
    </lineage>
</organism>
<keyword id="KW-0997">Cell inner membrane</keyword>
<keyword id="KW-1003">Cell membrane</keyword>
<keyword id="KW-0201">Cytochrome c-type biogenesis</keyword>
<keyword id="KW-1015">Disulfide bond</keyword>
<keyword id="KW-0249">Electron transport</keyword>
<keyword id="KW-0472">Membrane</keyword>
<keyword id="KW-0520">NAD</keyword>
<keyword id="KW-0560">Oxidoreductase</keyword>
<keyword id="KW-0676">Redox-active center</keyword>
<keyword id="KW-0732">Signal</keyword>
<keyword id="KW-0812">Transmembrane</keyword>
<keyword id="KW-1133">Transmembrane helix</keyword>
<keyword id="KW-0813">Transport</keyword>
<feature type="signal peptide" evidence="1">
    <location>
        <begin position="1"/>
        <end position="19"/>
    </location>
</feature>
<feature type="chain" id="PRO_1000049611" description="Thiol:disulfide interchange protein DsbD">
    <location>
        <begin position="20"/>
        <end position="598"/>
    </location>
</feature>
<feature type="transmembrane region" description="Helical" evidence="1">
    <location>
        <begin position="197"/>
        <end position="217"/>
    </location>
</feature>
<feature type="transmembrane region" description="Helical" evidence="1">
    <location>
        <begin position="242"/>
        <end position="262"/>
    </location>
</feature>
<feature type="transmembrane region" description="Helical" evidence="1">
    <location>
        <begin position="277"/>
        <end position="297"/>
    </location>
</feature>
<feature type="transmembrane region" description="Helical" evidence="1">
    <location>
        <begin position="330"/>
        <end position="350"/>
    </location>
</feature>
<feature type="transmembrane region" description="Helical" evidence="1">
    <location>
        <begin position="356"/>
        <end position="376"/>
    </location>
</feature>
<feature type="transmembrane region" description="Helical" evidence="1">
    <location>
        <begin position="391"/>
        <end position="411"/>
    </location>
</feature>
<feature type="transmembrane region" description="Helical" evidence="1">
    <location>
        <begin position="423"/>
        <end position="443"/>
    </location>
</feature>
<feature type="domain" description="Thioredoxin" evidence="1">
    <location>
        <begin position="459"/>
        <end position="598"/>
    </location>
</feature>
<feature type="region of interest" description="Disordered" evidence="2">
    <location>
        <begin position="147"/>
        <end position="187"/>
    </location>
</feature>
<feature type="compositionally biased region" description="Pro residues" evidence="2">
    <location>
        <begin position="165"/>
        <end position="176"/>
    </location>
</feature>
<feature type="disulfide bond" description="Redox-active" evidence="1">
    <location>
        <begin position="122"/>
        <end position="128"/>
    </location>
</feature>
<feature type="disulfide bond" description="Redox-active" evidence="1">
    <location>
        <begin position="216"/>
        <end position="338"/>
    </location>
</feature>
<feature type="disulfide bond" description="Redox-active" evidence="1">
    <location>
        <begin position="513"/>
        <end position="516"/>
    </location>
</feature>
<gene>
    <name evidence="1" type="primary">dsbD</name>
    <name type="ordered locus">KPN78578_44560</name>
    <name type="ORF">KPN_04526</name>
</gene>